<accession>B1YPJ0</accession>
<organism>
    <name type="scientific">Burkholderia ambifaria (strain MC40-6)</name>
    <dbReference type="NCBI Taxonomy" id="398577"/>
    <lineage>
        <taxon>Bacteria</taxon>
        <taxon>Pseudomonadati</taxon>
        <taxon>Pseudomonadota</taxon>
        <taxon>Betaproteobacteria</taxon>
        <taxon>Burkholderiales</taxon>
        <taxon>Burkholderiaceae</taxon>
        <taxon>Burkholderia</taxon>
        <taxon>Burkholderia cepacia complex</taxon>
    </lineage>
</organism>
<proteinExistence type="inferred from homology"/>
<sequence length="165" mass="17497">MDIAHDLQSIGAQEQALVFPHFDPARAWALGNRMHALATARGHAIAIDIVTFGQPLFYAALAGATPDNADWVRRKRNVVAHFRRSSYAIGLRMQQAGASLADKHGLPLSDYSPHGGSFPLTVAGAGVIGSITASGLPQRADHEFVVEALCAELGQDYAALALARS</sequence>
<dbReference type="EMBL" id="CP001025">
    <property type="protein sequence ID" value="ACB63967.1"/>
    <property type="molecule type" value="Genomic_DNA"/>
</dbReference>
<dbReference type="RefSeq" id="WP_012363789.1">
    <property type="nucleotide sequence ID" value="NC_010551.1"/>
</dbReference>
<dbReference type="SMR" id="B1YPJ0"/>
<dbReference type="KEGG" id="bac:BamMC406_1480"/>
<dbReference type="HOGENOM" id="CLU_101036_2_2_4"/>
<dbReference type="OrthoDB" id="9815315at2"/>
<dbReference type="Proteomes" id="UP000001680">
    <property type="component" value="Chromosome 1"/>
</dbReference>
<dbReference type="Gene3D" id="3.30.450.150">
    <property type="entry name" value="Haem-degrading domain"/>
    <property type="match status" value="1"/>
</dbReference>
<dbReference type="HAMAP" id="MF_00761">
    <property type="entry name" value="UPF0303"/>
    <property type="match status" value="1"/>
</dbReference>
<dbReference type="InterPro" id="IPR005624">
    <property type="entry name" value="PduO/GlcC-like"/>
</dbReference>
<dbReference type="InterPro" id="IPR038084">
    <property type="entry name" value="PduO/GlcC-like_sf"/>
</dbReference>
<dbReference type="InterPro" id="IPR010371">
    <property type="entry name" value="YBR137W-like"/>
</dbReference>
<dbReference type="NCBIfam" id="NF002695">
    <property type="entry name" value="PRK02487.1-4"/>
    <property type="match status" value="1"/>
</dbReference>
<dbReference type="NCBIfam" id="NF002696">
    <property type="entry name" value="PRK02487.1-5"/>
    <property type="match status" value="1"/>
</dbReference>
<dbReference type="PANTHER" id="PTHR28255">
    <property type="match status" value="1"/>
</dbReference>
<dbReference type="PANTHER" id="PTHR28255:SF1">
    <property type="entry name" value="UPF0303 PROTEIN YBR137W"/>
    <property type="match status" value="1"/>
</dbReference>
<dbReference type="Pfam" id="PF03928">
    <property type="entry name" value="HbpS-like"/>
    <property type="match status" value="1"/>
</dbReference>
<dbReference type="PIRSF" id="PIRSF008757">
    <property type="entry name" value="UCP008757"/>
    <property type="match status" value="1"/>
</dbReference>
<dbReference type="SUPFAM" id="SSF143744">
    <property type="entry name" value="GlcG-like"/>
    <property type="match status" value="1"/>
</dbReference>
<comment type="similarity">
    <text evidence="1">Belongs to the UPF0303 family.</text>
</comment>
<gene>
    <name type="ordered locus">BamMC406_1480</name>
</gene>
<feature type="chain" id="PRO_1000198321" description="UPF0303 protein BamMC406_1480">
    <location>
        <begin position="1"/>
        <end position="165"/>
    </location>
</feature>
<protein>
    <recommendedName>
        <fullName evidence="1">UPF0303 protein BamMC406_1480</fullName>
    </recommendedName>
</protein>
<name>Y1480_BURA4</name>
<evidence type="ECO:0000255" key="1">
    <source>
        <dbReference type="HAMAP-Rule" id="MF_00761"/>
    </source>
</evidence>
<reference key="1">
    <citation type="submission" date="2008-04" db="EMBL/GenBank/DDBJ databases">
        <title>Complete sequence of chromosome 1 of Burkholderia ambifaria MC40-6.</title>
        <authorList>
            <person name="Copeland A."/>
            <person name="Lucas S."/>
            <person name="Lapidus A."/>
            <person name="Glavina del Rio T."/>
            <person name="Dalin E."/>
            <person name="Tice H."/>
            <person name="Pitluck S."/>
            <person name="Chain P."/>
            <person name="Malfatti S."/>
            <person name="Shin M."/>
            <person name="Vergez L."/>
            <person name="Lang D."/>
            <person name="Schmutz J."/>
            <person name="Larimer F."/>
            <person name="Land M."/>
            <person name="Hauser L."/>
            <person name="Kyrpides N."/>
            <person name="Lykidis A."/>
            <person name="Ramette A."/>
            <person name="Konstantinidis K."/>
            <person name="Tiedje J."/>
            <person name="Richardson P."/>
        </authorList>
    </citation>
    <scope>NUCLEOTIDE SEQUENCE [LARGE SCALE GENOMIC DNA]</scope>
    <source>
        <strain>MC40-6</strain>
    </source>
</reference>